<evidence type="ECO:0000250" key="1"/>
<evidence type="ECO:0000250" key="2">
    <source>
        <dbReference type="UniProtKB" id="P00157"/>
    </source>
</evidence>
<evidence type="ECO:0000255" key="3">
    <source>
        <dbReference type="PROSITE-ProRule" id="PRU00967"/>
    </source>
</evidence>
<evidence type="ECO:0000255" key="4">
    <source>
        <dbReference type="PROSITE-ProRule" id="PRU00968"/>
    </source>
</evidence>
<protein>
    <recommendedName>
        <fullName>Cytochrome b</fullName>
    </recommendedName>
    <alternativeName>
        <fullName>Complex III subunit 3</fullName>
    </alternativeName>
    <alternativeName>
        <fullName>Complex III subunit III</fullName>
    </alternativeName>
    <alternativeName>
        <fullName>Cytochrome b-c1 complex subunit 3</fullName>
    </alternativeName>
    <alternativeName>
        <fullName>Ubiquinol-cytochrome-c reductase complex cytochrome b subunit</fullName>
    </alternativeName>
</protein>
<keyword id="KW-0249">Electron transport</keyword>
<keyword id="KW-0349">Heme</keyword>
<keyword id="KW-0408">Iron</keyword>
<keyword id="KW-0472">Membrane</keyword>
<keyword id="KW-0479">Metal-binding</keyword>
<keyword id="KW-0496">Mitochondrion</keyword>
<keyword id="KW-0999">Mitochondrion inner membrane</keyword>
<keyword id="KW-0679">Respiratory chain</keyword>
<keyword id="KW-0812">Transmembrane</keyword>
<keyword id="KW-1133">Transmembrane helix</keyword>
<keyword id="KW-0813">Transport</keyword>
<keyword id="KW-0830">Ubiquinone</keyword>
<sequence length="379" mass="42689">MTNIRKTHPLFKIINDSLIDLPTPSSISSWWNFGSLLAVCLGIQILTGLFLAMHYTSDTATAFQSVTHICRDVNYGWLLRYMHANGASMFVICLFLHVGRGLYYGSYIYTETWNVGILLLFAVMATAFMGYVLPWGQMSFWGATVITNLLSAIPYIGTNLVEWIWGGFSVDKATLTRFFAFHFLLPFIIAALVMVHLLFLHETGSNNPTGIPSDADMIPFHPYHTIKDMLGALTMFLVLLMLVLFSPDLLGDPDNYIPANPLNTPPHIKPEWYFLFAYAILRSIPNKLGGVLALVLSILILALMPLLHTSKQRSMMFRPLSQCLFWLLVADLLTLTWIGGQPVEHPFIIIGQLASILYFSLVLVLMPLISIVENRLLKW</sequence>
<reference key="1">
    <citation type="journal article" date="2001" name="Can. J. Zool.">
        <title>Phylogenetic relationships among megachiropteran species from the two major islands of the Philippines, deduced from DNA sequences of the cytochrome b gene.</title>
        <authorList>
            <person name="Bastian S.T. Jr."/>
            <person name="Tanaka K."/>
            <person name="Anunciado R.V.P."/>
            <person name="Natural N.G."/>
            <person name="Sumalde A.C."/>
            <person name="Namikawa T."/>
        </authorList>
    </citation>
    <scope>NUCLEOTIDE SEQUENCE [GENOMIC DNA]</scope>
</reference>
<name>CYB_EONSP</name>
<feature type="chain" id="PRO_0000060921" description="Cytochrome b">
    <location>
        <begin position="1"/>
        <end position="379"/>
    </location>
</feature>
<feature type="transmembrane region" description="Helical" evidence="2">
    <location>
        <begin position="33"/>
        <end position="53"/>
    </location>
</feature>
<feature type="transmembrane region" description="Helical" evidence="2">
    <location>
        <begin position="77"/>
        <end position="98"/>
    </location>
</feature>
<feature type="transmembrane region" description="Helical" evidence="2">
    <location>
        <begin position="113"/>
        <end position="133"/>
    </location>
</feature>
<feature type="transmembrane region" description="Helical" evidence="2">
    <location>
        <begin position="178"/>
        <end position="198"/>
    </location>
</feature>
<feature type="transmembrane region" description="Helical" evidence="2">
    <location>
        <begin position="226"/>
        <end position="246"/>
    </location>
</feature>
<feature type="transmembrane region" description="Helical" evidence="2">
    <location>
        <begin position="288"/>
        <end position="308"/>
    </location>
</feature>
<feature type="transmembrane region" description="Helical" evidence="2">
    <location>
        <begin position="320"/>
        <end position="340"/>
    </location>
</feature>
<feature type="transmembrane region" description="Helical" evidence="2">
    <location>
        <begin position="347"/>
        <end position="367"/>
    </location>
</feature>
<feature type="binding site" description="axial binding residue" evidence="2">
    <location>
        <position position="83"/>
    </location>
    <ligand>
        <name>heme b</name>
        <dbReference type="ChEBI" id="CHEBI:60344"/>
        <label>b562</label>
    </ligand>
    <ligandPart>
        <name>Fe</name>
        <dbReference type="ChEBI" id="CHEBI:18248"/>
    </ligandPart>
</feature>
<feature type="binding site" description="axial binding residue" evidence="2">
    <location>
        <position position="97"/>
    </location>
    <ligand>
        <name>heme b</name>
        <dbReference type="ChEBI" id="CHEBI:60344"/>
        <label>b566</label>
    </ligand>
    <ligandPart>
        <name>Fe</name>
        <dbReference type="ChEBI" id="CHEBI:18248"/>
    </ligandPart>
</feature>
<feature type="binding site" description="axial binding residue" evidence="2">
    <location>
        <position position="182"/>
    </location>
    <ligand>
        <name>heme b</name>
        <dbReference type="ChEBI" id="CHEBI:60344"/>
        <label>b562</label>
    </ligand>
    <ligandPart>
        <name>Fe</name>
        <dbReference type="ChEBI" id="CHEBI:18248"/>
    </ligandPart>
</feature>
<feature type="binding site" description="axial binding residue" evidence="2">
    <location>
        <position position="196"/>
    </location>
    <ligand>
        <name>heme b</name>
        <dbReference type="ChEBI" id="CHEBI:60344"/>
        <label>b566</label>
    </ligand>
    <ligandPart>
        <name>Fe</name>
        <dbReference type="ChEBI" id="CHEBI:18248"/>
    </ligandPart>
</feature>
<feature type="binding site" evidence="2">
    <location>
        <position position="201"/>
    </location>
    <ligand>
        <name>a ubiquinone</name>
        <dbReference type="ChEBI" id="CHEBI:16389"/>
    </ligand>
</feature>
<proteinExistence type="inferred from homology"/>
<dbReference type="EMBL" id="AB046324">
    <property type="protein sequence ID" value="BAB67836.1"/>
    <property type="molecule type" value="Genomic_DNA"/>
</dbReference>
<dbReference type="SMR" id="Q94YL5"/>
<dbReference type="GO" id="GO:0005743">
    <property type="term" value="C:mitochondrial inner membrane"/>
    <property type="evidence" value="ECO:0007669"/>
    <property type="project" value="UniProtKB-SubCell"/>
</dbReference>
<dbReference type="GO" id="GO:0045275">
    <property type="term" value="C:respiratory chain complex III"/>
    <property type="evidence" value="ECO:0007669"/>
    <property type="project" value="InterPro"/>
</dbReference>
<dbReference type="GO" id="GO:0046872">
    <property type="term" value="F:metal ion binding"/>
    <property type="evidence" value="ECO:0007669"/>
    <property type="project" value="UniProtKB-KW"/>
</dbReference>
<dbReference type="GO" id="GO:0008121">
    <property type="term" value="F:ubiquinol-cytochrome-c reductase activity"/>
    <property type="evidence" value="ECO:0007669"/>
    <property type="project" value="InterPro"/>
</dbReference>
<dbReference type="GO" id="GO:0006122">
    <property type="term" value="P:mitochondrial electron transport, ubiquinol to cytochrome c"/>
    <property type="evidence" value="ECO:0007669"/>
    <property type="project" value="TreeGrafter"/>
</dbReference>
<dbReference type="CDD" id="cd00290">
    <property type="entry name" value="cytochrome_b_C"/>
    <property type="match status" value="1"/>
</dbReference>
<dbReference type="CDD" id="cd00284">
    <property type="entry name" value="Cytochrome_b_N"/>
    <property type="match status" value="1"/>
</dbReference>
<dbReference type="FunFam" id="1.20.810.10:FF:000002">
    <property type="entry name" value="Cytochrome b"/>
    <property type="match status" value="1"/>
</dbReference>
<dbReference type="Gene3D" id="1.20.810.10">
    <property type="entry name" value="Cytochrome Bc1 Complex, Chain C"/>
    <property type="match status" value="1"/>
</dbReference>
<dbReference type="InterPro" id="IPR005798">
    <property type="entry name" value="Cyt_b/b6_C"/>
</dbReference>
<dbReference type="InterPro" id="IPR036150">
    <property type="entry name" value="Cyt_b/b6_C_sf"/>
</dbReference>
<dbReference type="InterPro" id="IPR005797">
    <property type="entry name" value="Cyt_b/b6_N"/>
</dbReference>
<dbReference type="InterPro" id="IPR027387">
    <property type="entry name" value="Cytb/b6-like_sf"/>
</dbReference>
<dbReference type="InterPro" id="IPR030689">
    <property type="entry name" value="Cytochrome_b"/>
</dbReference>
<dbReference type="InterPro" id="IPR048260">
    <property type="entry name" value="Cytochrome_b_C_euk/bac"/>
</dbReference>
<dbReference type="InterPro" id="IPR048259">
    <property type="entry name" value="Cytochrome_b_N_euk/bac"/>
</dbReference>
<dbReference type="InterPro" id="IPR016174">
    <property type="entry name" value="Di-haem_cyt_TM"/>
</dbReference>
<dbReference type="PANTHER" id="PTHR19271">
    <property type="entry name" value="CYTOCHROME B"/>
    <property type="match status" value="1"/>
</dbReference>
<dbReference type="PANTHER" id="PTHR19271:SF16">
    <property type="entry name" value="CYTOCHROME B"/>
    <property type="match status" value="1"/>
</dbReference>
<dbReference type="Pfam" id="PF00032">
    <property type="entry name" value="Cytochrom_B_C"/>
    <property type="match status" value="1"/>
</dbReference>
<dbReference type="Pfam" id="PF00033">
    <property type="entry name" value="Cytochrome_B"/>
    <property type="match status" value="1"/>
</dbReference>
<dbReference type="PIRSF" id="PIRSF038885">
    <property type="entry name" value="COB"/>
    <property type="match status" value="1"/>
</dbReference>
<dbReference type="SUPFAM" id="SSF81648">
    <property type="entry name" value="a domain/subunit of cytochrome bc1 complex (Ubiquinol-cytochrome c reductase)"/>
    <property type="match status" value="1"/>
</dbReference>
<dbReference type="SUPFAM" id="SSF81342">
    <property type="entry name" value="Transmembrane di-heme cytochromes"/>
    <property type="match status" value="1"/>
</dbReference>
<dbReference type="PROSITE" id="PS51003">
    <property type="entry name" value="CYTB_CTER"/>
    <property type="match status" value="1"/>
</dbReference>
<dbReference type="PROSITE" id="PS51002">
    <property type="entry name" value="CYTB_NTER"/>
    <property type="match status" value="1"/>
</dbReference>
<gene>
    <name type="primary">MT-CYB</name>
    <name type="synonym">COB</name>
    <name type="synonym">CYTB</name>
    <name type="synonym">MTCYB</name>
</gene>
<geneLocation type="mitochondrion"/>
<organism>
    <name type="scientific">Eonycteris spelaea</name>
    <name type="common">Lesser dawn bat</name>
    <name type="synonym">Macroglossus spelaeus</name>
    <dbReference type="NCBI Taxonomy" id="58065"/>
    <lineage>
        <taxon>Eukaryota</taxon>
        <taxon>Metazoa</taxon>
        <taxon>Chordata</taxon>
        <taxon>Craniata</taxon>
        <taxon>Vertebrata</taxon>
        <taxon>Euteleostomi</taxon>
        <taxon>Mammalia</taxon>
        <taxon>Eutheria</taxon>
        <taxon>Laurasiatheria</taxon>
        <taxon>Chiroptera</taxon>
        <taxon>Yinpterochiroptera</taxon>
        <taxon>Pteropodoidea</taxon>
        <taxon>Pteropodidae</taxon>
        <taxon>Rousettinae</taxon>
        <taxon>Eonycteris</taxon>
    </lineage>
</organism>
<comment type="function">
    <text evidence="2">Component of the ubiquinol-cytochrome c reductase complex (complex III or cytochrome b-c1 complex) that is part of the mitochondrial respiratory chain. The b-c1 complex mediates electron transfer from ubiquinol to cytochrome c. Contributes to the generation of a proton gradient across the mitochondrial membrane that is then used for ATP synthesis.</text>
</comment>
<comment type="cofactor">
    <cofactor evidence="2">
        <name>heme b</name>
        <dbReference type="ChEBI" id="CHEBI:60344"/>
    </cofactor>
    <text evidence="2">Binds 2 heme b groups non-covalently.</text>
</comment>
<comment type="subunit">
    <text evidence="2">The cytochrome bc1 complex contains 11 subunits: 3 respiratory subunits (MT-CYB, CYC1 and UQCRFS1), 2 core proteins (UQCRC1 and UQCRC2) and 6 low-molecular weight proteins (UQCRH/QCR6, UQCRB/QCR7, UQCRQ/QCR8, UQCR10/QCR9, UQCR11/QCR10 and a cleavage product of UQCRFS1). This cytochrome bc1 complex then forms a dimer.</text>
</comment>
<comment type="subcellular location">
    <subcellularLocation>
        <location evidence="2">Mitochondrion inner membrane</location>
        <topology evidence="2">Multi-pass membrane protein</topology>
    </subcellularLocation>
</comment>
<comment type="miscellaneous">
    <text evidence="1">Heme 1 (or BL or b562) is low-potential and absorbs at about 562 nm, and heme 2 (or BH or b566) is high-potential and absorbs at about 566 nm.</text>
</comment>
<comment type="similarity">
    <text evidence="3 4">Belongs to the cytochrome b family.</text>
</comment>
<comment type="caution">
    <text evidence="2">The full-length protein contains only eight transmembrane helices, not nine as predicted by bioinformatics tools.</text>
</comment>
<accession>Q94YL5</accession>